<organism>
    <name type="scientific">Mycobacterium tuberculosis (strain CDC 1551 / Oshkosh)</name>
    <dbReference type="NCBI Taxonomy" id="83331"/>
    <lineage>
        <taxon>Bacteria</taxon>
        <taxon>Bacillati</taxon>
        <taxon>Actinomycetota</taxon>
        <taxon>Actinomycetes</taxon>
        <taxon>Mycobacteriales</taxon>
        <taxon>Mycobacteriaceae</taxon>
        <taxon>Mycobacterium</taxon>
        <taxon>Mycobacterium tuberculosis complex</taxon>
    </lineage>
</organism>
<feature type="chain" id="PRO_0000427030" description="dCTP deaminase, dUMP-forming">
    <location>
        <begin position="1"/>
        <end position="190"/>
    </location>
</feature>
<feature type="region of interest" description="Disordered" evidence="2">
    <location>
        <begin position="160"/>
        <end position="190"/>
    </location>
</feature>
<feature type="compositionally biased region" description="Polar residues" evidence="2">
    <location>
        <begin position="171"/>
        <end position="190"/>
    </location>
</feature>
<feature type="active site" description="Proton donor/acceptor" evidence="1">
    <location>
        <position position="129"/>
    </location>
</feature>
<feature type="binding site" evidence="1">
    <location>
        <begin position="101"/>
        <end position="106"/>
    </location>
    <ligand>
        <name>dCTP</name>
        <dbReference type="ChEBI" id="CHEBI:61481"/>
    </ligand>
</feature>
<feature type="binding site" evidence="1">
    <location>
        <position position="119"/>
    </location>
    <ligand>
        <name>dCTP</name>
        <dbReference type="ChEBI" id="CHEBI:61481"/>
    </ligand>
</feature>
<feature type="binding site" evidence="1">
    <location>
        <begin position="127"/>
        <end position="129"/>
    </location>
    <ligand>
        <name>dCTP</name>
        <dbReference type="ChEBI" id="CHEBI:61481"/>
    </ligand>
</feature>
<feature type="binding site" evidence="1">
    <location>
        <position position="148"/>
    </location>
    <ligand>
        <name>dCTP</name>
        <dbReference type="ChEBI" id="CHEBI:61481"/>
    </ligand>
</feature>
<feature type="binding site" evidence="1">
    <location>
        <position position="162"/>
    </location>
    <ligand>
        <name>dCTP</name>
        <dbReference type="ChEBI" id="CHEBI:61481"/>
    </ligand>
</feature>
<feature type="binding site" evidence="1">
    <location>
        <position position="170"/>
    </location>
    <ligand>
        <name>dCTP</name>
        <dbReference type="ChEBI" id="CHEBI:61481"/>
    </ligand>
</feature>
<feature type="binding site" evidence="1">
    <location>
        <position position="174"/>
    </location>
    <ligand>
        <name>dCTP</name>
        <dbReference type="ChEBI" id="CHEBI:61481"/>
    </ligand>
</feature>
<feature type="site" description="Important for bifunctional activity" evidence="1">
    <location>
        <begin position="116"/>
        <end position="117"/>
    </location>
</feature>
<name>DCDB_MYCTO</name>
<reference key="1">
    <citation type="journal article" date="2002" name="J. Bacteriol.">
        <title>Whole-genome comparison of Mycobacterium tuberculosis clinical and laboratory strains.</title>
        <authorList>
            <person name="Fleischmann R.D."/>
            <person name="Alland D."/>
            <person name="Eisen J.A."/>
            <person name="Carpenter L."/>
            <person name="White O."/>
            <person name="Peterson J.D."/>
            <person name="DeBoy R.T."/>
            <person name="Dodson R.J."/>
            <person name="Gwinn M.L."/>
            <person name="Haft D.H."/>
            <person name="Hickey E.K."/>
            <person name="Kolonay J.F."/>
            <person name="Nelson W.C."/>
            <person name="Umayam L.A."/>
            <person name="Ermolaeva M.D."/>
            <person name="Salzberg S.L."/>
            <person name="Delcher A."/>
            <person name="Utterback T.R."/>
            <person name="Weidman J.F."/>
            <person name="Khouri H.M."/>
            <person name="Gill J."/>
            <person name="Mikula A."/>
            <person name="Bishai W."/>
            <person name="Jacobs W.R. Jr."/>
            <person name="Venter J.C."/>
            <person name="Fraser C.M."/>
        </authorList>
    </citation>
    <scope>NUCLEOTIDE SEQUENCE [LARGE SCALE GENOMIC DNA]</scope>
    <source>
        <strain>CDC 1551 / Oshkosh</strain>
    </source>
</reference>
<protein>
    <recommendedName>
        <fullName evidence="1">dCTP deaminase, dUMP-forming</fullName>
        <ecNumber evidence="1">3.5.4.30</ecNumber>
    </recommendedName>
    <alternativeName>
        <fullName evidence="1">Bifunctional dCTP deaminase:dUTPase</fullName>
    </alternativeName>
    <alternativeName>
        <fullName evidence="1">DCD-DUT</fullName>
    </alternativeName>
</protein>
<keyword id="KW-0378">Hydrolase</keyword>
<keyword id="KW-0546">Nucleotide metabolism</keyword>
<keyword id="KW-0547">Nucleotide-binding</keyword>
<keyword id="KW-1185">Reference proteome</keyword>
<comment type="function">
    <text evidence="1">Bifunctional enzyme that catalyzes both the deamination of dCTP to dUTP and the hydrolysis of dUTP to dUMP without releasing the toxic dUTP intermediate.</text>
</comment>
<comment type="catalytic activity">
    <reaction evidence="1">
        <text>dCTP + 2 H2O = dUMP + NH4(+) + diphosphate</text>
        <dbReference type="Rhea" id="RHEA:19205"/>
        <dbReference type="ChEBI" id="CHEBI:15377"/>
        <dbReference type="ChEBI" id="CHEBI:28938"/>
        <dbReference type="ChEBI" id="CHEBI:33019"/>
        <dbReference type="ChEBI" id="CHEBI:61481"/>
        <dbReference type="ChEBI" id="CHEBI:246422"/>
        <dbReference type="EC" id="3.5.4.30"/>
    </reaction>
</comment>
<comment type="pathway">
    <text evidence="1">Pyrimidine metabolism; dUMP biosynthesis; dUMP from dCTP: step 1/1.</text>
</comment>
<comment type="subunit">
    <text evidence="1">Homotrimer.</text>
</comment>
<comment type="similarity">
    <text evidence="1">Belongs to the dCTP deaminase family.</text>
</comment>
<proteinExistence type="inferred from homology"/>
<evidence type="ECO:0000255" key="1">
    <source>
        <dbReference type="HAMAP-Rule" id="MF_00146"/>
    </source>
</evidence>
<evidence type="ECO:0000256" key="2">
    <source>
        <dbReference type="SAM" id="MobiDB-lite"/>
    </source>
</evidence>
<dbReference type="EC" id="3.5.4.30" evidence="1"/>
<dbReference type="EMBL" id="AE000516">
    <property type="protein sequence ID" value="AAK44559.1"/>
    <property type="molecule type" value="Genomic_DNA"/>
</dbReference>
<dbReference type="PIR" id="B70526">
    <property type="entry name" value="B70526"/>
</dbReference>
<dbReference type="RefSeq" id="WP_003898399.1">
    <property type="nucleotide sequence ID" value="NZ_KK341227.1"/>
</dbReference>
<dbReference type="SMR" id="P9WP16"/>
<dbReference type="GeneID" id="45424289"/>
<dbReference type="KEGG" id="mtc:MT0336"/>
<dbReference type="PATRIC" id="fig|83331.31.peg.356"/>
<dbReference type="HOGENOM" id="CLU_087476_2_0_11"/>
<dbReference type="UniPathway" id="UPA00610">
    <property type="reaction ID" value="UER00667"/>
</dbReference>
<dbReference type="Proteomes" id="UP000001020">
    <property type="component" value="Chromosome"/>
</dbReference>
<dbReference type="GO" id="GO:0033973">
    <property type="term" value="F:dCTP deaminase (dUMP-forming) activity"/>
    <property type="evidence" value="ECO:0007669"/>
    <property type="project" value="UniProtKB-UniRule"/>
</dbReference>
<dbReference type="GO" id="GO:0008829">
    <property type="term" value="F:dCTP deaminase activity"/>
    <property type="evidence" value="ECO:0007669"/>
    <property type="project" value="InterPro"/>
</dbReference>
<dbReference type="GO" id="GO:0000166">
    <property type="term" value="F:nucleotide binding"/>
    <property type="evidence" value="ECO:0007669"/>
    <property type="project" value="UniProtKB-KW"/>
</dbReference>
<dbReference type="GO" id="GO:0006226">
    <property type="term" value="P:dUMP biosynthetic process"/>
    <property type="evidence" value="ECO:0007669"/>
    <property type="project" value="UniProtKB-UniRule"/>
</dbReference>
<dbReference type="GO" id="GO:0006229">
    <property type="term" value="P:dUTP biosynthetic process"/>
    <property type="evidence" value="ECO:0007669"/>
    <property type="project" value="InterPro"/>
</dbReference>
<dbReference type="GO" id="GO:0015949">
    <property type="term" value="P:nucleobase-containing small molecule interconversion"/>
    <property type="evidence" value="ECO:0007669"/>
    <property type="project" value="TreeGrafter"/>
</dbReference>
<dbReference type="CDD" id="cd07557">
    <property type="entry name" value="trimeric_dUTPase"/>
    <property type="match status" value="1"/>
</dbReference>
<dbReference type="FunFam" id="2.70.40.10:FF:000005">
    <property type="entry name" value="dCTP deaminase, dUMP-forming"/>
    <property type="match status" value="1"/>
</dbReference>
<dbReference type="Gene3D" id="2.70.40.10">
    <property type="match status" value="1"/>
</dbReference>
<dbReference type="HAMAP" id="MF_00146">
    <property type="entry name" value="dCTP_deaminase"/>
    <property type="match status" value="1"/>
</dbReference>
<dbReference type="InterPro" id="IPR011962">
    <property type="entry name" value="dCTP_deaminase"/>
</dbReference>
<dbReference type="InterPro" id="IPR036157">
    <property type="entry name" value="dUTPase-like_sf"/>
</dbReference>
<dbReference type="InterPro" id="IPR033704">
    <property type="entry name" value="dUTPase_trimeric"/>
</dbReference>
<dbReference type="NCBIfam" id="TIGR02274">
    <property type="entry name" value="dCTP_deam"/>
    <property type="match status" value="1"/>
</dbReference>
<dbReference type="PANTHER" id="PTHR42680">
    <property type="entry name" value="DCTP DEAMINASE"/>
    <property type="match status" value="1"/>
</dbReference>
<dbReference type="PANTHER" id="PTHR42680:SF3">
    <property type="entry name" value="DCTP DEAMINASE"/>
    <property type="match status" value="1"/>
</dbReference>
<dbReference type="Pfam" id="PF22769">
    <property type="entry name" value="DCD"/>
    <property type="match status" value="1"/>
</dbReference>
<dbReference type="SUPFAM" id="SSF51283">
    <property type="entry name" value="dUTPase-like"/>
    <property type="match status" value="1"/>
</dbReference>
<accession>P9WP16</accession>
<accession>L0T3B0</accession>
<accession>O07247</accession>
<gene>
    <name evidence="1" type="primary">dcd</name>
    <name type="ordered locus">MT0336</name>
</gene>
<sequence length="190" mass="20870">MLLSDRDLRAEISSGRLGIDPFDDTLVQPSSIDVRLDCLFRVFNNTRYTHIDPAKQQDELTSLVQPVDGEPFVLHPGEFVLGSTLELFTLPDNLAGRLEGKSSLGRLGLLTHSTAGFIDPGFSGHITLELSNVANLPITLWPGMKIGQLCMLRLTSPSEHPYGSSRAGSKYQGQRGPTPSRSYQNFIRST</sequence>